<reference key="1">
    <citation type="submission" date="2009-03" db="EMBL/GenBank/DDBJ databases">
        <title>Comparison of the complete genome sequences of Rhodococcus erythropolis PR4 and Rhodococcus opacus B4.</title>
        <authorList>
            <person name="Takarada H."/>
            <person name="Sekine M."/>
            <person name="Hosoyama A."/>
            <person name="Yamada R."/>
            <person name="Fujisawa T."/>
            <person name="Omata S."/>
            <person name="Shimizu A."/>
            <person name="Tsukatani N."/>
            <person name="Tanikawa S."/>
            <person name="Fujita N."/>
            <person name="Harayama S."/>
        </authorList>
    </citation>
    <scope>NUCLEOTIDE SEQUENCE [LARGE SCALE GENOMIC DNA]</scope>
    <source>
        <strain>B4</strain>
    </source>
</reference>
<keyword id="KW-0227">DNA damage</keyword>
<keyword id="KW-0234">DNA repair</keyword>
<keyword id="KW-0235">DNA replication</keyword>
<keyword id="KW-0436">Ligase</keyword>
<keyword id="KW-0460">Magnesium</keyword>
<keyword id="KW-0464">Manganese</keyword>
<keyword id="KW-0479">Metal-binding</keyword>
<keyword id="KW-0520">NAD</keyword>
<keyword id="KW-0862">Zinc</keyword>
<name>DNLJ_RHOOB</name>
<feature type="chain" id="PRO_0000380456" description="DNA ligase">
    <location>
        <begin position="1"/>
        <end position="697"/>
    </location>
</feature>
<feature type="domain" description="BRCT" evidence="1">
    <location>
        <begin position="609"/>
        <end position="697"/>
    </location>
</feature>
<feature type="active site" description="N6-AMP-lysine intermediate" evidence="1">
    <location>
        <position position="125"/>
    </location>
</feature>
<feature type="binding site" evidence="1">
    <location>
        <begin position="44"/>
        <end position="48"/>
    </location>
    <ligand>
        <name>NAD(+)</name>
        <dbReference type="ChEBI" id="CHEBI:57540"/>
    </ligand>
</feature>
<feature type="binding site" evidence="1">
    <location>
        <begin position="93"/>
        <end position="94"/>
    </location>
    <ligand>
        <name>NAD(+)</name>
        <dbReference type="ChEBI" id="CHEBI:57540"/>
    </ligand>
</feature>
<feature type="binding site" evidence="1">
    <location>
        <position position="123"/>
    </location>
    <ligand>
        <name>NAD(+)</name>
        <dbReference type="ChEBI" id="CHEBI:57540"/>
    </ligand>
</feature>
<feature type="binding site" evidence="1">
    <location>
        <position position="146"/>
    </location>
    <ligand>
        <name>NAD(+)</name>
        <dbReference type="ChEBI" id="CHEBI:57540"/>
    </ligand>
</feature>
<feature type="binding site" evidence="1">
    <location>
        <position position="186"/>
    </location>
    <ligand>
        <name>NAD(+)</name>
        <dbReference type="ChEBI" id="CHEBI:57540"/>
    </ligand>
</feature>
<feature type="binding site" evidence="1">
    <location>
        <position position="302"/>
    </location>
    <ligand>
        <name>NAD(+)</name>
        <dbReference type="ChEBI" id="CHEBI:57540"/>
    </ligand>
</feature>
<feature type="binding site" evidence="1">
    <location>
        <position position="326"/>
    </location>
    <ligand>
        <name>NAD(+)</name>
        <dbReference type="ChEBI" id="CHEBI:57540"/>
    </ligand>
</feature>
<feature type="binding site" evidence="1">
    <location>
        <position position="420"/>
    </location>
    <ligand>
        <name>Zn(2+)</name>
        <dbReference type="ChEBI" id="CHEBI:29105"/>
    </ligand>
</feature>
<feature type="binding site" evidence="1">
    <location>
        <position position="423"/>
    </location>
    <ligand>
        <name>Zn(2+)</name>
        <dbReference type="ChEBI" id="CHEBI:29105"/>
    </ligand>
</feature>
<feature type="binding site" evidence="1">
    <location>
        <position position="439"/>
    </location>
    <ligand>
        <name>Zn(2+)</name>
        <dbReference type="ChEBI" id="CHEBI:29105"/>
    </ligand>
</feature>
<feature type="binding site" evidence="1">
    <location>
        <position position="445"/>
    </location>
    <ligand>
        <name>Zn(2+)</name>
        <dbReference type="ChEBI" id="CHEBI:29105"/>
    </ligand>
</feature>
<sequence>MVSESTEAPTPAPGSVREHWNELAEDVRQHQFRYYVRDAPIISDGEFDALLGELNDLENQYPDLRTPDSPTQLVGGGFATDFASADHLERMLSLDNVFATDELRTWISRVEQETGPDLHYLCEVKIDGVALNLVYENGRLVRAATRGDGRTGEEVTLNARTIDDIPEKLTGTDKYPIPALLEVRGEVFFRLEDFAALNAALVEEGKAPFANPRNSAAGSLRQKNPAVTARRRLGMICHGLGRSEGFEPASQYDAYTALAAWGLPVSTHTVRVTGADAVVDRVQYWGEHRHDVEHEIDGLVVKVDETSLQRRLGSTSRAPRWAIAYKYPPEEATTKLLDIRVNVGRTGRVTPFAYMEPVTVAGSTVSLATLHNGSEVKRKGVLIGDTVVLRKAGDVIPEVLGPVVDARTGDEYEFVMPANCPECDTPLAPAKEGDADIRCPNQQYCPAQLRERVFHVAGRGAFDIEVLGYEAATSLLEAKAIGDEGDLFSLTEDDLLKTTLFRTKAGGLSANGRRLLDNLDSAKDKPLWRVLVALSIRHVGPTAARALAGEFGSLDRIRESSVEELAAVDGVGGTIAAAVAEWFGVDWHRQIVDKWSAAGVRMEDERDESIPRNLEGLSIVVTGSLETFSRDQAKEAILVRGGKAAGSVSKKTAFVVAGESPGSKHDKAVELGVPVLDEDGFRRLLEGGPDAVTDSGV</sequence>
<accession>C1B1S4</accession>
<gene>
    <name evidence="1" type="primary">ligA</name>
    <name type="ordered locus">ROP_65220</name>
</gene>
<proteinExistence type="inferred from homology"/>
<dbReference type="EC" id="6.5.1.2" evidence="1"/>
<dbReference type="EMBL" id="AP011115">
    <property type="protein sequence ID" value="BAH54769.1"/>
    <property type="molecule type" value="Genomic_DNA"/>
</dbReference>
<dbReference type="SMR" id="C1B1S4"/>
<dbReference type="STRING" id="632772.ROP_65220"/>
<dbReference type="KEGG" id="rop:ROP_65220"/>
<dbReference type="PATRIC" id="fig|632772.20.peg.6807"/>
<dbReference type="HOGENOM" id="CLU_007764_2_1_11"/>
<dbReference type="Proteomes" id="UP000002212">
    <property type="component" value="Chromosome"/>
</dbReference>
<dbReference type="GO" id="GO:0005829">
    <property type="term" value="C:cytosol"/>
    <property type="evidence" value="ECO:0007669"/>
    <property type="project" value="TreeGrafter"/>
</dbReference>
<dbReference type="GO" id="GO:0003911">
    <property type="term" value="F:DNA ligase (NAD+) activity"/>
    <property type="evidence" value="ECO:0007669"/>
    <property type="project" value="UniProtKB-UniRule"/>
</dbReference>
<dbReference type="GO" id="GO:0046872">
    <property type="term" value="F:metal ion binding"/>
    <property type="evidence" value="ECO:0007669"/>
    <property type="project" value="UniProtKB-KW"/>
</dbReference>
<dbReference type="GO" id="GO:0006281">
    <property type="term" value="P:DNA repair"/>
    <property type="evidence" value="ECO:0007669"/>
    <property type="project" value="UniProtKB-KW"/>
</dbReference>
<dbReference type="GO" id="GO:0006260">
    <property type="term" value="P:DNA replication"/>
    <property type="evidence" value="ECO:0007669"/>
    <property type="project" value="UniProtKB-KW"/>
</dbReference>
<dbReference type="CDD" id="cd17748">
    <property type="entry name" value="BRCT_DNA_ligase_like"/>
    <property type="match status" value="1"/>
</dbReference>
<dbReference type="CDD" id="cd00114">
    <property type="entry name" value="LIGANc"/>
    <property type="match status" value="1"/>
</dbReference>
<dbReference type="FunFam" id="1.10.150.20:FF:000006">
    <property type="entry name" value="DNA ligase"/>
    <property type="match status" value="1"/>
</dbReference>
<dbReference type="FunFam" id="1.10.287.610:FF:000002">
    <property type="entry name" value="DNA ligase"/>
    <property type="match status" value="1"/>
</dbReference>
<dbReference type="FunFam" id="2.40.50.140:FF:000012">
    <property type="entry name" value="DNA ligase"/>
    <property type="match status" value="1"/>
</dbReference>
<dbReference type="FunFam" id="3.30.470.30:FF:000001">
    <property type="entry name" value="DNA ligase"/>
    <property type="match status" value="1"/>
</dbReference>
<dbReference type="FunFam" id="3.40.50.10190:FF:000054">
    <property type="entry name" value="DNA ligase"/>
    <property type="match status" value="1"/>
</dbReference>
<dbReference type="Gene3D" id="6.20.10.30">
    <property type="match status" value="1"/>
</dbReference>
<dbReference type="Gene3D" id="1.10.150.20">
    <property type="entry name" value="5' to 3' exonuclease, C-terminal subdomain"/>
    <property type="match status" value="2"/>
</dbReference>
<dbReference type="Gene3D" id="3.40.50.10190">
    <property type="entry name" value="BRCT domain"/>
    <property type="match status" value="1"/>
</dbReference>
<dbReference type="Gene3D" id="3.30.470.30">
    <property type="entry name" value="DNA ligase/mRNA capping enzyme"/>
    <property type="match status" value="1"/>
</dbReference>
<dbReference type="Gene3D" id="1.10.287.610">
    <property type="entry name" value="Helix hairpin bin"/>
    <property type="match status" value="1"/>
</dbReference>
<dbReference type="Gene3D" id="2.40.50.140">
    <property type="entry name" value="Nucleic acid-binding proteins"/>
    <property type="match status" value="1"/>
</dbReference>
<dbReference type="HAMAP" id="MF_01588">
    <property type="entry name" value="DNA_ligase_A"/>
    <property type="match status" value="1"/>
</dbReference>
<dbReference type="InterPro" id="IPR001357">
    <property type="entry name" value="BRCT_dom"/>
</dbReference>
<dbReference type="InterPro" id="IPR036420">
    <property type="entry name" value="BRCT_dom_sf"/>
</dbReference>
<dbReference type="InterPro" id="IPR041663">
    <property type="entry name" value="DisA/LigA_HHH"/>
</dbReference>
<dbReference type="InterPro" id="IPR001679">
    <property type="entry name" value="DNA_ligase"/>
</dbReference>
<dbReference type="InterPro" id="IPR018239">
    <property type="entry name" value="DNA_ligase_AS"/>
</dbReference>
<dbReference type="InterPro" id="IPR033136">
    <property type="entry name" value="DNA_ligase_CS"/>
</dbReference>
<dbReference type="InterPro" id="IPR013839">
    <property type="entry name" value="DNAligase_adenylation"/>
</dbReference>
<dbReference type="InterPro" id="IPR013840">
    <property type="entry name" value="DNAligase_N"/>
</dbReference>
<dbReference type="InterPro" id="IPR012340">
    <property type="entry name" value="NA-bd_OB-fold"/>
</dbReference>
<dbReference type="InterPro" id="IPR004150">
    <property type="entry name" value="NAD_DNA_ligase_OB"/>
</dbReference>
<dbReference type="InterPro" id="IPR010994">
    <property type="entry name" value="RuvA_2-like"/>
</dbReference>
<dbReference type="InterPro" id="IPR004149">
    <property type="entry name" value="Znf_DNAligase_C4"/>
</dbReference>
<dbReference type="NCBIfam" id="TIGR00575">
    <property type="entry name" value="dnlj"/>
    <property type="match status" value="1"/>
</dbReference>
<dbReference type="NCBIfam" id="NF005932">
    <property type="entry name" value="PRK07956.1"/>
    <property type="match status" value="1"/>
</dbReference>
<dbReference type="PANTHER" id="PTHR23389">
    <property type="entry name" value="CHROMOSOME TRANSMISSION FIDELITY FACTOR 18"/>
    <property type="match status" value="1"/>
</dbReference>
<dbReference type="PANTHER" id="PTHR23389:SF9">
    <property type="entry name" value="DNA LIGASE"/>
    <property type="match status" value="1"/>
</dbReference>
<dbReference type="Pfam" id="PF00533">
    <property type="entry name" value="BRCT"/>
    <property type="match status" value="1"/>
</dbReference>
<dbReference type="Pfam" id="PF01653">
    <property type="entry name" value="DNA_ligase_aden"/>
    <property type="match status" value="1"/>
</dbReference>
<dbReference type="Pfam" id="PF03120">
    <property type="entry name" value="DNA_ligase_OB"/>
    <property type="match status" value="1"/>
</dbReference>
<dbReference type="Pfam" id="PF03119">
    <property type="entry name" value="DNA_ligase_ZBD"/>
    <property type="match status" value="1"/>
</dbReference>
<dbReference type="Pfam" id="PF12826">
    <property type="entry name" value="HHH_2"/>
    <property type="match status" value="1"/>
</dbReference>
<dbReference type="Pfam" id="PF22745">
    <property type="entry name" value="Nlig-Ia"/>
    <property type="match status" value="1"/>
</dbReference>
<dbReference type="PIRSF" id="PIRSF001604">
    <property type="entry name" value="LigA"/>
    <property type="match status" value="1"/>
</dbReference>
<dbReference type="SMART" id="SM00292">
    <property type="entry name" value="BRCT"/>
    <property type="match status" value="1"/>
</dbReference>
<dbReference type="SMART" id="SM00532">
    <property type="entry name" value="LIGANc"/>
    <property type="match status" value="1"/>
</dbReference>
<dbReference type="SUPFAM" id="SSF52113">
    <property type="entry name" value="BRCT domain"/>
    <property type="match status" value="1"/>
</dbReference>
<dbReference type="SUPFAM" id="SSF56091">
    <property type="entry name" value="DNA ligase/mRNA capping enzyme, catalytic domain"/>
    <property type="match status" value="1"/>
</dbReference>
<dbReference type="SUPFAM" id="SSF50249">
    <property type="entry name" value="Nucleic acid-binding proteins"/>
    <property type="match status" value="1"/>
</dbReference>
<dbReference type="SUPFAM" id="SSF47781">
    <property type="entry name" value="RuvA domain 2-like"/>
    <property type="match status" value="1"/>
</dbReference>
<dbReference type="PROSITE" id="PS50172">
    <property type="entry name" value="BRCT"/>
    <property type="match status" value="1"/>
</dbReference>
<dbReference type="PROSITE" id="PS01055">
    <property type="entry name" value="DNA_LIGASE_N1"/>
    <property type="match status" value="1"/>
</dbReference>
<dbReference type="PROSITE" id="PS01056">
    <property type="entry name" value="DNA_LIGASE_N2"/>
    <property type="match status" value="1"/>
</dbReference>
<comment type="function">
    <text evidence="1">DNA ligase that catalyzes the formation of phosphodiester linkages between 5'-phosphoryl and 3'-hydroxyl groups in double-stranded DNA using NAD as a coenzyme and as the energy source for the reaction. It is essential for DNA replication and repair of damaged DNA.</text>
</comment>
<comment type="catalytic activity">
    <reaction evidence="1">
        <text>NAD(+) + (deoxyribonucleotide)n-3'-hydroxyl + 5'-phospho-(deoxyribonucleotide)m = (deoxyribonucleotide)n+m + AMP + beta-nicotinamide D-nucleotide.</text>
        <dbReference type="EC" id="6.5.1.2"/>
    </reaction>
</comment>
<comment type="cofactor">
    <cofactor evidence="1">
        <name>Mg(2+)</name>
        <dbReference type="ChEBI" id="CHEBI:18420"/>
    </cofactor>
    <cofactor evidence="1">
        <name>Mn(2+)</name>
        <dbReference type="ChEBI" id="CHEBI:29035"/>
    </cofactor>
</comment>
<comment type="similarity">
    <text evidence="1">Belongs to the NAD-dependent DNA ligase family. LigA subfamily.</text>
</comment>
<organism>
    <name type="scientific">Rhodococcus opacus (strain B4)</name>
    <dbReference type="NCBI Taxonomy" id="632772"/>
    <lineage>
        <taxon>Bacteria</taxon>
        <taxon>Bacillati</taxon>
        <taxon>Actinomycetota</taxon>
        <taxon>Actinomycetes</taxon>
        <taxon>Mycobacteriales</taxon>
        <taxon>Nocardiaceae</taxon>
        <taxon>Rhodococcus</taxon>
    </lineage>
</organism>
<protein>
    <recommendedName>
        <fullName evidence="1">DNA ligase</fullName>
        <ecNumber evidence="1">6.5.1.2</ecNumber>
    </recommendedName>
    <alternativeName>
        <fullName evidence="1">Polydeoxyribonucleotide synthase [NAD(+)]</fullName>
    </alternativeName>
</protein>
<evidence type="ECO:0000255" key="1">
    <source>
        <dbReference type="HAMAP-Rule" id="MF_01588"/>
    </source>
</evidence>